<gene>
    <name evidence="1" type="primary">acpP</name>
    <name type="ordered locus">Ccon26_15490</name>
    <name type="ORF">CCC13826_0561</name>
</gene>
<reference key="1">
    <citation type="submission" date="2007-10" db="EMBL/GenBank/DDBJ databases">
        <title>Genome sequence of Campylobacter concisus 13826 isolated from human feces.</title>
        <authorList>
            <person name="Fouts D.E."/>
            <person name="Mongodin E.F."/>
            <person name="Puiu D."/>
            <person name="Sebastian Y."/>
            <person name="Miller W.G."/>
            <person name="Mandrell R.E."/>
            <person name="On S."/>
            <person name="Nelson K.E."/>
        </authorList>
    </citation>
    <scope>NUCLEOTIDE SEQUENCE [LARGE SCALE GENOMIC DNA]</scope>
    <source>
        <strain>13826</strain>
    </source>
</reference>
<evidence type="ECO:0000255" key="1">
    <source>
        <dbReference type="HAMAP-Rule" id="MF_01217"/>
    </source>
</evidence>
<evidence type="ECO:0000255" key="2">
    <source>
        <dbReference type="PROSITE-ProRule" id="PRU00258"/>
    </source>
</evidence>
<protein>
    <recommendedName>
        <fullName evidence="1">Acyl carrier protein</fullName>
        <shortName evidence="1">ACP</shortName>
    </recommendedName>
</protein>
<proteinExistence type="inferred from homology"/>
<keyword id="KW-0963">Cytoplasm</keyword>
<keyword id="KW-0275">Fatty acid biosynthesis</keyword>
<keyword id="KW-0276">Fatty acid metabolism</keyword>
<keyword id="KW-0444">Lipid biosynthesis</keyword>
<keyword id="KW-0443">Lipid metabolism</keyword>
<keyword id="KW-0596">Phosphopantetheine</keyword>
<keyword id="KW-0597">Phosphoprotein</keyword>
<sequence length="77" mass="8590">MAVFEDVRDVVVEQLSVDPQAVKLESKIIEDLGADSLDVVELVMALEEKFEVEIPDSEAEKLVSIQDVVNYIEKLGK</sequence>
<organism>
    <name type="scientific">Campylobacter concisus (strain 13826)</name>
    <dbReference type="NCBI Taxonomy" id="360104"/>
    <lineage>
        <taxon>Bacteria</taxon>
        <taxon>Pseudomonadati</taxon>
        <taxon>Campylobacterota</taxon>
        <taxon>Epsilonproteobacteria</taxon>
        <taxon>Campylobacterales</taxon>
        <taxon>Campylobacteraceae</taxon>
        <taxon>Campylobacter</taxon>
    </lineage>
</organism>
<dbReference type="EMBL" id="CP000792">
    <property type="protein sequence ID" value="EAT99180.1"/>
    <property type="molecule type" value="Genomic_DNA"/>
</dbReference>
<dbReference type="RefSeq" id="WP_002941395.1">
    <property type="nucleotide sequence ID" value="NC_009802.2"/>
</dbReference>
<dbReference type="SMR" id="A7ZF37"/>
<dbReference type="STRING" id="360104.CCC13826_0561"/>
<dbReference type="KEGG" id="cco:CCC13826_0561"/>
<dbReference type="eggNOG" id="COG0236">
    <property type="taxonomic scope" value="Bacteria"/>
</dbReference>
<dbReference type="HOGENOM" id="CLU_108696_5_1_7"/>
<dbReference type="OrthoDB" id="9804551at2"/>
<dbReference type="UniPathway" id="UPA00094"/>
<dbReference type="Proteomes" id="UP000001121">
    <property type="component" value="Chromosome"/>
</dbReference>
<dbReference type="GO" id="GO:0005829">
    <property type="term" value="C:cytosol"/>
    <property type="evidence" value="ECO:0007669"/>
    <property type="project" value="TreeGrafter"/>
</dbReference>
<dbReference type="GO" id="GO:0016020">
    <property type="term" value="C:membrane"/>
    <property type="evidence" value="ECO:0007669"/>
    <property type="project" value="GOC"/>
</dbReference>
<dbReference type="GO" id="GO:0000035">
    <property type="term" value="F:acyl binding"/>
    <property type="evidence" value="ECO:0007669"/>
    <property type="project" value="TreeGrafter"/>
</dbReference>
<dbReference type="GO" id="GO:0000036">
    <property type="term" value="F:acyl carrier activity"/>
    <property type="evidence" value="ECO:0007669"/>
    <property type="project" value="UniProtKB-UniRule"/>
</dbReference>
<dbReference type="GO" id="GO:0009245">
    <property type="term" value="P:lipid A biosynthetic process"/>
    <property type="evidence" value="ECO:0007669"/>
    <property type="project" value="TreeGrafter"/>
</dbReference>
<dbReference type="Gene3D" id="1.10.1200.10">
    <property type="entry name" value="ACP-like"/>
    <property type="match status" value="1"/>
</dbReference>
<dbReference type="HAMAP" id="MF_01217">
    <property type="entry name" value="Acyl_carrier"/>
    <property type="match status" value="1"/>
</dbReference>
<dbReference type="InterPro" id="IPR003231">
    <property type="entry name" value="ACP"/>
</dbReference>
<dbReference type="InterPro" id="IPR036736">
    <property type="entry name" value="ACP-like_sf"/>
</dbReference>
<dbReference type="InterPro" id="IPR009081">
    <property type="entry name" value="PP-bd_ACP"/>
</dbReference>
<dbReference type="InterPro" id="IPR006162">
    <property type="entry name" value="Ppantetheine_attach_site"/>
</dbReference>
<dbReference type="NCBIfam" id="TIGR00517">
    <property type="entry name" value="acyl_carrier"/>
    <property type="match status" value="1"/>
</dbReference>
<dbReference type="NCBIfam" id="NF002148">
    <property type="entry name" value="PRK00982.1-2"/>
    <property type="match status" value="1"/>
</dbReference>
<dbReference type="NCBIfam" id="NF002150">
    <property type="entry name" value="PRK00982.1-4"/>
    <property type="match status" value="1"/>
</dbReference>
<dbReference type="PANTHER" id="PTHR20863">
    <property type="entry name" value="ACYL CARRIER PROTEIN"/>
    <property type="match status" value="1"/>
</dbReference>
<dbReference type="PANTHER" id="PTHR20863:SF76">
    <property type="entry name" value="CARRIER DOMAIN-CONTAINING PROTEIN"/>
    <property type="match status" value="1"/>
</dbReference>
<dbReference type="Pfam" id="PF00550">
    <property type="entry name" value="PP-binding"/>
    <property type="match status" value="1"/>
</dbReference>
<dbReference type="SUPFAM" id="SSF47336">
    <property type="entry name" value="ACP-like"/>
    <property type="match status" value="1"/>
</dbReference>
<dbReference type="PROSITE" id="PS50075">
    <property type="entry name" value="CARRIER"/>
    <property type="match status" value="1"/>
</dbReference>
<dbReference type="PROSITE" id="PS00012">
    <property type="entry name" value="PHOSPHOPANTETHEINE"/>
    <property type="match status" value="1"/>
</dbReference>
<comment type="function">
    <text evidence="1">Carrier of the growing fatty acid chain in fatty acid biosynthesis.</text>
</comment>
<comment type="pathway">
    <text evidence="1">Lipid metabolism; fatty acid biosynthesis.</text>
</comment>
<comment type="subcellular location">
    <subcellularLocation>
        <location evidence="1">Cytoplasm</location>
    </subcellularLocation>
</comment>
<comment type="PTM">
    <text evidence="1">4'-phosphopantetheine is transferred from CoA to a specific serine of apo-ACP by AcpS. This modification is essential for activity because fatty acids are bound in thioester linkage to the sulfhydryl of the prosthetic group.</text>
</comment>
<comment type="similarity">
    <text evidence="1">Belongs to the acyl carrier protein (ACP) family.</text>
</comment>
<feature type="chain" id="PRO_1000073121" description="Acyl carrier protein">
    <location>
        <begin position="1"/>
        <end position="77"/>
    </location>
</feature>
<feature type="domain" description="Carrier" evidence="2">
    <location>
        <begin position="1"/>
        <end position="76"/>
    </location>
</feature>
<feature type="modified residue" description="O-(pantetheine 4'-phosphoryl)serine" evidence="2">
    <location>
        <position position="36"/>
    </location>
</feature>
<name>ACP_CAMC1</name>
<accession>A7ZF37</accession>